<evidence type="ECO:0000250" key="1"/>
<evidence type="ECO:0000305" key="2"/>
<keyword id="KW-0012">Acyltransferase</keyword>
<keyword id="KW-0963">Cytoplasm</keyword>
<keyword id="KW-0808">Transferase</keyword>
<accession>Q8K9W5</accession>
<protein>
    <recommendedName>
        <fullName>Phosphate acetyltransferase</fullName>
        <ecNumber>2.3.1.8</ecNumber>
    </recommendedName>
    <alternativeName>
        <fullName>Phosphotransacetylase</fullName>
    </alternativeName>
</protein>
<sequence length="709" mass="81236">MSRIIMLIPLNKKVSLTTISLSILYFFNKKEQKNCFKSFSYLPLIKSDNINFIRAYFSKKINVLDDINFFKKNFNSDEYSYLLDKIIKECFNKKKINEFILIKGISRKEHDDADQINFDIAQNIDAEVIFIDNLKDFSLGCFKRKERKINVFLQQKKYKNFLGLIFSDINSPFIFNKMKYNFFDKLIILKNTKKNTCIHAIKKNIFFNSFFRVIAFIPWNKKLVKSSVINIFKFLNATLVNTISIKDAFIKNITIFDEDSSVILKKSYANTLVLISSSRMETFFKTLYLVCKSKKIGAILLTGVLKLSENSIKLLKFLTNQGVPVFFIKENTVETLSQLQKFNFNINVQNKYFINKLLEYTSSFFNKNHLISLKKKTTNFYKKTYSPKEFCYRLKILSKSKHKRIILPESYEPRILKAASICHRLGIAECILLGDPKKIYNIANENKIDLNKNIEIKDPILIRDQYVPRLLEIRKNKKIDEIFARKQLKDNVILATLILESGKVDGLVSGTINTTANTIRPALQIIKTDPIYSLVSSIFFILLPNEVLIYGDCAINIEPNSKELAEIAIQSANSAKMFGIEPRIAMLSYSTGFSGTGWQVEKIRDATSIVKSKRPDLLIDGPIQYDAAISKEVAKLKIPYSSILGSANIFIFPDLNSGNITYKAVQRSADLICIGPMLQGLKKPVNDLSRGASVEDIVYTIALTSIQSL</sequence>
<feature type="chain" id="PRO_0000179123" description="Phosphate acetyltransferase">
    <location>
        <begin position="1"/>
        <end position="709"/>
    </location>
</feature>
<feature type="region of interest" description="Phosphate acetyltransferase">
    <location>
        <begin position="389"/>
        <end position="709"/>
    </location>
</feature>
<name>PTA_BUCAP</name>
<proteinExistence type="inferred from homology"/>
<reference key="1">
    <citation type="journal article" date="2002" name="Science">
        <title>50 million years of genomic stasis in endosymbiotic bacteria.</title>
        <authorList>
            <person name="Tamas I."/>
            <person name="Klasson L."/>
            <person name="Canbaeck B."/>
            <person name="Naeslund A.K."/>
            <person name="Eriksson A.-S."/>
            <person name="Wernegreen J.J."/>
            <person name="Sandstroem J.P."/>
            <person name="Moran N.A."/>
            <person name="Andersson S.G.E."/>
        </authorList>
    </citation>
    <scope>NUCLEOTIDE SEQUENCE [LARGE SCALE GENOMIC DNA]</scope>
    <source>
        <strain>Sg</strain>
    </source>
</reference>
<dbReference type="EC" id="2.3.1.8"/>
<dbReference type="EMBL" id="AE013218">
    <property type="protein sequence ID" value="AAM67737.1"/>
    <property type="molecule type" value="Genomic_DNA"/>
</dbReference>
<dbReference type="RefSeq" id="WP_011053704.1">
    <property type="nucleotide sequence ID" value="NC_004061.1"/>
</dbReference>
<dbReference type="SMR" id="Q8K9W5"/>
<dbReference type="STRING" id="198804.BUsg_170"/>
<dbReference type="GeneID" id="93003639"/>
<dbReference type="KEGG" id="bas:BUsg_170"/>
<dbReference type="eggNOG" id="COG0280">
    <property type="taxonomic scope" value="Bacteria"/>
</dbReference>
<dbReference type="eggNOG" id="COG0857">
    <property type="taxonomic scope" value="Bacteria"/>
</dbReference>
<dbReference type="HOGENOM" id="CLU_019723_2_1_6"/>
<dbReference type="UniPathway" id="UPA00340">
    <property type="reaction ID" value="UER00459"/>
</dbReference>
<dbReference type="Proteomes" id="UP000000416">
    <property type="component" value="Chromosome"/>
</dbReference>
<dbReference type="GO" id="GO:0005737">
    <property type="term" value="C:cytoplasm"/>
    <property type="evidence" value="ECO:0007669"/>
    <property type="project" value="UniProtKB-SubCell"/>
</dbReference>
<dbReference type="GO" id="GO:0008959">
    <property type="term" value="F:phosphate acetyltransferase activity"/>
    <property type="evidence" value="ECO:0007669"/>
    <property type="project" value="UniProtKB-EC"/>
</dbReference>
<dbReference type="GO" id="GO:0006085">
    <property type="term" value="P:acetyl-CoA biosynthetic process"/>
    <property type="evidence" value="ECO:0007669"/>
    <property type="project" value="UniProtKB-UniPathway"/>
</dbReference>
<dbReference type="FunFam" id="3.40.50.10750:FF:000001">
    <property type="entry name" value="Phosphate acetyltransferase"/>
    <property type="match status" value="1"/>
</dbReference>
<dbReference type="Gene3D" id="3.40.50.10950">
    <property type="match status" value="1"/>
</dbReference>
<dbReference type="Gene3D" id="3.40.1390.20">
    <property type="entry name" value="HprK N-terminal domain-like"/>
    <property type="match status" value="1"/>
</dbReference>
<dbReference type="Gene3D" id="3.40.50.10750">
    <property type="entry name" value="Isocitrate/Isopropylmalate dehydrogenase-like"/>
    <property type="match status" value="1"/>
</dbReference>
<dbReference type="InterPro" id="IPR010766">
    <property type="entry name" value="DRTGG"/>
</dbReference>
<dbReference type="InterPro" id="IPR016475">
    <property type="entry name" value="P-Actrans_bac"/>
</dbReference>
<dbReference type="InterPro" id="IPR004614">
    <property type="entry name" value="P_AcTrfase"/>
</dbReference>
<dbReference type="InterPro" id="IPR042113">
    <property type="entry name" value="P_AcTrfase_dom1"/>
</dbReference>
<dbReference type="InterPro" id="IPR042112">
    <property type="entry name" value="P_AcTrfase_dom2"/>
</dbReference>
<dbReference type="InterPro" id="IPR050500">
    <property type="entry name" value="Phos_Acetyltrans/Butyryltrans"/>
</dbReference>
<dbReference type="InterPro" id="IPR002505">
    <property type="entry name" value="PTA_PTB"/>
</dbReference>
<dbReference type="InterPro" id="IPR028979">
    <property type="entry name" value="Ser_kin/Pase_Hpr-like_N_sf"/>
</dbReference>
<dbReference type="NCBIfam" id="NF004167">
    <property type="entry name" value="PRK05632.1"/>
    <property type="match status" value="1"/>
</dbReference>
<dbReference type="NCBIfam" id="NF007233">
    <property type="entry name" value="PRK09653.1"/>
    <property type="match status" value="1"/>
</dbReference>
<dbReference type="NCBIfam" id="TIGR00651">
    <property type="entry name" value="pta"/>
    <property type="match status" value="1"/>
</dbReference>
<dbReference type="PANTHER" id="PTHR43356">
    <property type="entry name" value="PHOSPHATE ACETYLTRANSFERASE"/>
    <property type="match status" value="1"/>
</dbReference>
<dbReference type="PANTHER" id="PTHR43356:SF3">
    <property type="entry name" value="PHOSPHATE ACETYLTRANSFERASE"/>
    <property type="match status" value="1"/>
</dbReference>
<dbReference type="Pfam" id="PF13500">
    <property type="entry name" value="AAA_26"/>
    <property type="match status" value="1"/>
</dbReference>
<dbReference type="Pfam" id="PF07085">
    <property type="entry name" value="DRTGG"/>
    <property type="match status" value="1"/>
</dbReference>
<dbReference type="Pfam" id="PF01515">
    <property type="entry name" value="PTA_PTB"/>
    <property type="match status" value="1"/>
</dbReference>
<dbReference type="PIRSF" id="PIRSF006107">
    <property type="entry name" value="PhpActrans_proteobac"/>
    <property type="match status" value="1"/>
</dbReference>
<dbReference type="SUPFAM" id="SSF75138">
    <property type="entry name" value="HprK N-terminal domain-like"/>
    <property type="match status" value="1"/>
</dbReference>
<dbReference type="SUPFAM" id="SSF53659">
    <property type="entry name" value="Isocitrate/Isopropylmalate dehydrogenase-like"/>
    <property type="match status" value="1"/>
</dbReference>
<comment type="function">
    <text evidence="1">Involved in acetate metabolism.</text>
</comment>
<comment type="catalytic activity">
    <reaction>
        <text>acetyl-CoA + phosphate = acetyl phosphate + CoA</text>
        <dbReference type="Rhea" id="RHEA:19521"/>
        <dbReference type="ChEBI" id="CHEBI:22191"/>
        <dbReference type="ChEBI" id="CHEBI:43474"/>
        <dbReference type="ChEBI" id="CHEBI:57287"/>
        <dbReference type="ChEBI" id="CHEBI:57288"/>
        <dbReference type="EC" id="2.3.1.8"/>
    </reaction>
</comment>
<comment type="pathway">
    <text>Metabolic intermediate biosynthesis; acetyl-CoA biosynthesis; acetyl-CoA from acetate: step 2/2.</text>
</comment>
<comment type="subunit">
    <text evidence="1">Homohexamer.</text>
</comment>
<comment type="subcellular location">
    <subcellularLocation>
        <location evidence="2">Cytoplasm</location>
    </subcellularLocation>
</comment>
<comment type="domain">
    <text evidence="1">The N-terminal region seems to be important for proper quaternary structure. The C-terminal region contains the substrate-binding site (By similarity).</text>
</comment>
<comment type="similarity">
    <text evidence="2">In the N-terminal section; belongs to the CobB/CobQ family.</text>
</comment>
<comment type="similarity">
    <text evidence="2">In the C-terminal section; belongs to the phosphate acetyltransferase and butyryltransferase family.</text>
</comment>
<organism>
    <name type="scientific">Buchnera aphidicola subsp. Schizaphis graminum (strain Sg)</name>
    <dbReference type="NCBI Taxonomy" id="198804"/>
    <lineage>
        <taxon>Bacteria</taxon>
        <taxon>Pseudomonadati</taxon>
        <taxon>Pseudomonadota</taxon>
        <taxon>Gammaproteobacteria</taxon>
        <taxon>Enterobacterales</taxon>
        <taxon>Erwiniaceae</taxon>
        <taxon>Buchnera</taxon>
    </lineage>
</organism>
<gene>
    <name type="primary">pta</name>
    <name type="ordered locus">BUsg_170</name>
</gene>